<evidence type="ECO:0000255" key="1">
    <source>
        <dbReference type="HAMAP-Rule" id="MF_04074"/>
    </source>
</evidence>
<evidence type="ECO:0000269" key="2">
    <source>
    </source>
</evidence>
<evidence type="ECO:0000269" key="3">
    <source>
    </source>
</evidence>
<sequence>MAARLCCQLDPARDVLCLRPVGAESRGRPFSGSLGTLSSPSPSAVPTDHGAHLSLRGLPVCAFSSAGPCALRFTSARRMETTVNAHQILPKVLHKRTLGLSAMSTTDLEAYFKDCLFKDWEELGEEIRLKVFVLGGCRHKLVCAPAPCNFFTSA</sequence>
<proteinExistence type="evidence at protein level"/>
<comment type="function">
    <text evidence="1 3">Multifunctional protein that plays a role in silencing host antiviral defenses and promoting viral transcription. Does not seem to be essential for HBV infection. May be directly involved in development of cirrhosis and liver cancer (hepatocellular carcinoma). Most of cytosolic activities involve modulation of cytosolic calcium. The effect on apoptosis is controversial depending on the cell types in which the studies have been conducted. May induce apoptosis by localizing in mitochondria and causing loss of mitochondrial membrane potential. May also modulate apoptosis by binding host CFLAR, a key regulator of the death-inducing signaling complex (DISC). Promotes viral transcription by using the host E3 ubiquitin ligase DDB1 to target the SMC5-SMC6 complex to proteasomal degradation. This host complex would otherwise bind to viral episomal DNA, and prevents its transcription. Moderately stimulates transcription of many different viral and cellular transcription elements. Promoters and enhancers stimulated by HBx contain DNA binding sites for NF-kappa-B, AP-1, AP-2, c-EBP, ATF/CREB, or the calcium-activated factor NF-AT.</text>
</comment>
<comment type="subunit">
    <text evidence="1">May form homodimer. May interact with host CEBPA, CFLAR, CREB1, DDB1, E4F1, HBXIP, HSPD1/HSP60, NFKBIA, POLR2E and SMAD4. Interacts with host SMC5-SMC6 complex and induces its degradation. Interacts with host TRPC4AP; leading to prevent ubiquitination of TRPC4AP. Interacts with host PLSCR1; this interaction promotes ubiquitination and degradation of HBx and impairs HBx-mediated cell proliferation.</text>
</comment>
<comment type="interaction">
    <interactant intactId="EBI-7683985">
        <id>P03165</id>
    </interactant>
    <interactant intactId="EBI-296087">
        <id>P31749</id>
        <label>AKT1</label>
    </interactant>
    <organismsDiffer>true</organismsDiffer>
    <experiments>3</experiments>
</comment>
<comment type="interaction">
    <interactant intactId="EBI-7683985">
        <id>P03165</id>
    </interactant>
    <interactant intactId="EBI-298707">
        <id>P31750</id>
        <label>Akt1</label>
    </interactant>
    <organismsDiffer>true</organismsDiffer>
    <experiments>2</experiments>
</comment>
<comment type="subcellular location">
    <subcellularLocation>
        <location evidence="1">Host cytoplasm</location>
    </subcellularLocation>
    <subcellularLocation>
        <location evidence="1">Host nucleus</location>
    </subcellularLocation>
    <subcellularLocation>
        <location evidence="1">Host mitochondrion</location>
    </subcellularLocation>
    <text evidence="1">Mainly cytoplasmic as only a fraction is detected in the nucleus. In cytoplasm, a minor fraction associates with mitochondria or proteasomes.</text>
</comment>
<comment type="PTM">
    <text evidence="1">A fraction may be phosphorylated in insect cells and HepG2 cells, a human hepatoblastoma cell line. Phosphorylated in vitro by host protein kinase C or mitogen-activated protein kinase. N-acetylated in insect cells.</text>
</comment>
<comment type="similarity">
    <text evidence="1">Belongs to the orthohepadnavirus protein X family.</text>
</comment>
<comment type="caution">
    <text>Transcriptional activities should be taken with a grain of salt. As of 2007, all studies demonstrating in vivo interaction between protein X and transcriptional components were performed with significant overexpression of both proteins and in the absence of viral infection.</text>
</comment>
<protein>
    <recommendedName>
        <fullName evidence="1">Protein X</fullName>
    </recommendedName>
    <alternativeName>
        <fullName evidence="1">HBx</fullName>
    </alternativeName>
    <alternativeName>
        <fullName evidence="1">Peptide X</fullName>
    </alternativeName>
    <alternativeName>
        <fullName evidence="1">pX</fullName>
    </alternativeName>
</protein>
<organism>
    <name type="scientific">Hepatitis B virus genotype D subtype ayw (isolate France/Tiollais/1979)</name>
    <name type="common">HBV-D</name>
    <dbReference type="NCBI Taxonomy" id="490133"/>
    <lineage>
        <taxon>Viruses</taxon>
        <taxon>Riboviria</taxon>
        <taxon>Pararnavirae</taxon>
        <taxon>Artverviricota</taxon>
        <taxon>Revtraviricetes</taxon>
        <taxon>Blubervirales</taxon>
        <taxon>Hepadnaviridae</taxon>
        <taxon>Orthohepadnavirus</taxon>
        <taxon>Hepatitis B virus</taxon>
        <taxon>hepatitis B virus genotype D</taxon>
    </lineage>
</organism>
<organismHost>
    <name type="scientific">Homo sapiens</name>
    <name type="common">Human</name>
    <dbReference type="NCBI Taxonomy" id="9606"/>
</organismHost>
<organismHost>
    <name type="scientific">Pan troglodytes</name>
    <name type="common">Chimpanzee</name>
    <dbReference type="NCBI Taxonomy" id="9598"/>
</organismHost>
<name>X_HBVD3</name>
<keyword id="KW-1074">Activation of host NF-kappa-B by virus</keyword>
<keyword id="KW-0010">Activator</keyword>
<keyword id="KW-0053">Apoptosis</keyword>
<keyword id="KW-1035">Host cytoplasm</keyword>
<keyword id="KW-1079">Host G2/M cell cycle arrest by virus</keyword>
<keyword id="KW-1045">Host mitochondrion</keyword>
<keyword id="KW-1048">Host nucleus</keyword>
<keyword id="KW-0945">Host-virus interaction</keyword>
<keyword id="KW-1121">Modulation of host cell cycle by virus</keyword>
<keyword id="KW-1185">Reference proteome</keyword>
<keyword id="KW-0804">Transcription</keyword>
<keyword id="KW-0805">Transcription regulation</keyword>
<feature type="chain" id="PRO_0000222361" description="Protein X">
    <location>
        <begin position="1"/>
        <end position="154"/>
    </location>
</feature>
<feature type="region of interest" description="Mitochondrial targeting sequence" evidence="1">
    <location>
        <begin position="68"/>
        <end position="117"/>
    </location>
</feature>
<feature type="sequence variant" description="In strain: Switzerland/Strubin/1999.">
    <original>R</original>
    <variation>C</variation>
    <location>
        <position position="26"/>
    </location>
</feature>
<feature type="sequence variant" description="In strain: Switzerland/Strubin/1999.">
    <original>S</original>
    <variation>P</variation>
    <location>
        <position position="33"/>
    </location>
</feature>
<feature type="sequence variant" description="In strain: Switzerland/Strubin/1999.">
    <original>T</original>
    <variation>A</variation>
    <location>
        <position position="36"/>
    </location>
</feature>
<feature type="sequence variant" description="In strain: Switzerland/Strubin/1999.">
    <original>PSPS</original>
    <variation>SSLP</variation>
    <location>
        <begin position="40"/>
        <end position="43"/>
    </location>
</feature>
<feature type="sequence variant" description="In strain: Latvia.">
    <original>P</original>
    <variation>S</variation>
    <location>
        <position position="46"/>
    </location>
</feature>
<feature type="sequence variant" description="In strain: Switzerland/Strubin/1999.">
    <original>TD</original>
    <variation>AA</variation>
    <location>
        <begin position="47"/>
        <end position="48"/>
    </location>
</feature>
<feature type="sequence variant" description="In strain: Latvia.">
    <original>NAHQI</original>
    <variation>KAQPF</variation>
    <location>
        <begin position="84"/>
        <end position="88"/>
    </location>
</feature>
<feature type="sequence variant" description="In strain: Latvia.">
    <original>A</original>
    <variation>V</variation>
    <location>
        <position position="102"/>
    </location>
</feature>
<feature type="mutagenesis site" description="No effect on interaction with human DDB1." evidence="2">
    <original>RR</original>
    <variation>EE</variation>
    <location>
        <begin position="77"/>
        <end position="78"/>
    </location>
</feature>
<feature type="mutagenesis site" description="No effect on interaction with human DDB1." evidence="2">
    <original>K</original>
    <variation>E</variation>
    <location>
        <position position="91"/>
    </location>
</feature>
<feature type="mutagenesis site" description="No effect on interaction with human DDB1.">
    <original>K</original>
    <variation>E</variation>
    <location>
        <position position="95"/>
    </location>
</feature>
<feature type="mutagenesis site" description="Complete loss of interaction with human DDB1.">
    <original>R</original>
    <variation>E</variation>
    <location>
        <position position="96"/>
    </location>
</feature>
<feature type="mutagenesis site" description="Complete loss of interaction with human DDB1." evidence="2">
    <original>L</original>
    <variation>F</variation>
    <location>
        <position position="98"/>
    </location>
</feature>
<feature type="mutagenesis site" description="No effect on interaction with human DDB1." evidence="2">
    <original>D</original>
    <variation>R</variation>
    <location>
        <position position="107"/>
    </location>
</feature>
<feature type="mutagenesis site" description="No effect on interaction with human DDB1." evidence="2">
    <original>KD</original>
    <variation>ER</variation>
    <location>
        <begin position="113"/>
        <end position="114"/>
    </location>
</feature>
<gene>
    <name evidence="1" type="primary">X</name>
</gene>
<reference key="1">
    <citation type="journal article" date="1979" name="Nature">
        <title>Nucleotide sequence of the hepatitis B virus genome (subtype ayw) cloned in E. coli.</title>
        <authorList>
            <person name="Galibert F."/>
            <person name="Mandart E."/>
            <person name="Fitoussi F."/>
            <person name="Tiollais P."/>
            <person name="Charnay P."/>
        </authorList>
    </citation>
    <scope>NUCLEOTIDE SEQUENCE [GENOMIC DNA]</scope>
</reference>
<reference key="2">
    <citation type="journal article" date="1985" name="FEBS Lett.">
        <title>Subtype ayw variant of hepatitis B virus. DNA primary structure analysis.</title>
        <authorList>
            <person name="Bichko V."/>
            <person name="Pushko P."/>
            <person name="Dreilina D."/>
            <person name="Pumpen P."/>
            <person name="Gren E.Y."/>
        </authorList>
    </citation>
    <scope>NUCLEOTIDE SEQUENCE [GENOMIC DNA]</scope>
    <source>
        <strain>Latvia</strain>
    </source>
</reference>
<reference key="3">
    <citation type="journal article" date="1997" name="Hepatology">
        <title>Isolation and molecular characterization of hepatitis B virus X-protein from a baculovirus expression system.</title>
        <authorList>
            <person name="Urban S."/>
            <person name="Hildt E."/>
            <person name="Eckerskorn C."/>
            <person name="Sirma H."/>
            <person name="Kekule A."/>
            <person name="Hofschneider P.H."/>
        </authorList>
    </citation>
    <scope>CHARACTERIZATION</scope>
</reference>
<reference key="4">
    <citation type="journal article" date="2001" name="Virology">
        <title>Hepatitis B virus X protein interferes with cell viability through interaction with the p127-kDa UV-damaged DNA-binding protein.</title>
        <authorList>
            <person name="Lin-Marq N."/>
            <person name="Bontron S."/>
            <person name="Leupin O."/>
            <person name="Strubin M."/>
        </authorList>
    </citation>
    <scope>INTERACTION WITH HUMAN DDB1</scope>
    <scope>MUTAGENESIS OF 77-ARG-ARG-78; LYS-91; 95-LYS-ARG-96; LEU-98; ASP-107 AND 113-LYS-ASP-114</scope>
    <source>
        <strain>Switzerland/Strubin/1999</strain>
    </source>
</reference>
<reference key="5">
    <citation type="journal article" date="2002" name="J. Biol. Chem.">
        <title>Hepatitis B virus X protein associated with UV-DDB1 induces cell death in the nucleus and is functionally antagonized by UV-DDB2.</title>
        <authorList>
            <person name="Bontron S."/>
            <person name="Lin-Marq N."/>
            <person name="Strubin M."/>
        </authorList>
    </citation>
    <scope>INTERACTION WITH HUMAN DDB1</scope>
    <source>
        <strain>Switzerland/Strubin/1999</strain>
    </source>
</reference>
<reference key="6">
    <citation type="journal article" date="2003" name="J. Virol.">
        <title>Hepatitis B virus X protein and simian virus 5 V protein exhibit similar UV-DDB1 binding properties to mediate distinct activities.</title>
        <authorList>
            <person name="Leupin O."/>
            <person name="Bontron S."/>
            <person name="Strubin M."/>
        </authorList>
    </citation>
    <scope>INTERACTION WITH HUMAN DDB1</scope>
    <source>
        <strain>Switzerland/Strubin/1999</strain>
    </source>
</reference>
<reference key="7">
    <citation type="journal article" date="2005" name="J. Virol.">
        <title>Hepatitis B virus X protein stimulates viral genome replication via a DDB1-dependent pathway distinct from that leading to cell death.</title>
        <authorList>
            <person name="Leupin O."/>
            <person name="Bontron S."/>
            <person name="Schaeffer C."/>
            <person name="Strubin M."/>
        </authorList>
    </citation>
    <scope>FUNCTION</scope>
    <source>
        <strain>Switzerland/Strubin/1999</strain>
    </source>
</reference>
<reference key="8">
    <citation type="journal article" date="2006" name="Virus Res.">
        <title>Interaction of the hepatitis B virus protein HBx with the human transcription regulatory protein p120E4F in vitro.</title>
        <authorList>
            <person name="Rui E."/>
            <person name="Moura P.R."/>
            <person name="Goncalves K.A."/>
            <person name="Rooney R.J."/>
            <person name="Kobarg J."/>
        </authorList>
    </citation>
    <scope>INTERACTION WITH E4F1</scope>
</reference>
<reference key="9">
    <citation type="journal article" date="2004" name="J. Virol.">
        <title>The enigmatic X gene of hepatitis B virus.</title>
        <authorList>
            <person name="Bouchard M.J."/>
            <person name="Schneider R.J."/>
        </authorList>
    </citation>
    <scope>REVIEW</scope>
</reference>
<reference key="10">
    <citation type="journal article" date="2006" name="Cancer Sci.">
        <title>Molecular functions and biological roles of hepatitis B virus x protein.</title>
        <authorList>
            <person name="Tang H."/>
            <person name="Oishi N."/>
            <person name="Kaneko S."/>
            <person name="Murakami S."/>
        </authorList>
    </citation>
    <scope>REVIEW</scope>
</reference>
<dbReference type="EMBL" id="V01460">
    <property type="status" value="NOT_ANNOTATED_CDS"/>
    <property type="molecule type" value="Genomic_DNA"/>
</dbReference>
<dbReference type="EMBL" id="X02496">
    <property type="protein sequence ID" value="CAB41697.1"/>
    <property type="molecule type" value="Genomic_DNA"/>
</dbReference>
<dbReference type="PIR" id="A03719">
    <property type="entry name" value="QQVLD1"/>
</dbReference>
<dbReference type="PIR" id="A05237">
    <property type="entry name" value="QQVLBH"/>
</dbReference>
<dbReference type="SMR" id="P03165"/>
<dbReference type="IntAct" id="P03165">
    <property type="interactions" value="4"/>
</dbReference>
<dbReference type="MINT" id="P03165"/>
<dbReference type="iPTMnet" id="P03165"/>
<dbReference type="Proteomes" id="UP000007930">
    <property type="component" value="Segment"/>
</dbReference>
<dbReference type="GO" id="GO:0033650">
    <property type="term" value="C:host cell mitochondrion"/>
    <property type="evidence" value="ECO:0007669"/>
    <property type="project" value="UniProtKB-SubCell"/>
</dbReference>
<dbReference type="GO" id="GO:0042025">
    <property type="term" value="C:host cell nucleus"/>
    <property type="evidence" value="ECO:0007669"/>
    <property type="project" value="UniProtKB-SubCell"/>
</dbReference>
<dbReference type="GO" id="GO:0006351">
    <property type="term" value="P:DNA-templated transcription"/>
    <property type="evidence" value="ECO:0007669"/>
    <property type="project" value="UniProtKB-UniRule"/>
</dbReference>
<dbReference type="GO" id="GO:0085033">
    <property type="term" value="P:symbiont-mediated activation of host NF-kappaB cascade"/>
    <property type="evidence" value="ECO:0007669"/>
    <property type="project" value="UniProtKB-UniRule"/>
</dbReference>
<dbReference type="GO" id="GO:0039592">
    <property type="term" value="P:symbiont-mediated arrest of host cell cycle during G2/M transition"/>
    <property type="evidence" value="ECO:0007669"/>
    <property type="project" value="UniProtKB-UniRule"/>
</dbReference>
<dbReference type="GO" id="GO:0019079">
    <property type="term" value="P:viral genome replication"/>
    <property type="evidence" value="ECO:0007669"/>
    <property type="project" value="UniProtKB-UniRule"/>
</dbReference>
<dbReference type="HAMAP" id="MF_04074">
    <property type="entry name" value="HBV_X"/>
    <property type="match status" value="1"/>
</dbReference>
<dbReference type="InterPro" id="IPR000236">
    <property type="entry name" value="Transactivation_prot_X"/>
</dbReference>
<dbReference type="Pfam" id="PF00739">
    <property type="entry name" value="X"/>
    <property type="match status" value="1"/>
</dbReference>
<accession>P03165</accession>